<protein>
    <recommendedName>
        <fullName>U-box domain-containing protein 13</fullName>
        <ecNumber>2.3.2.27</ecNumber>
    </recommendedName>
    <alternativeName>
        <fullName>Plant U-box protein 13</fullName>
    </alternativeName>
    <alternativeName>
        <fullName evidence="4">RING-type E3 ubiquitin transferase PUB13</fullName>
    </alternativeName>
</protein>
<gene>
    <name type="primary">PUB13</name>
    <name type="ordered locus">At3g46510</name>
    <name type="ORF">F12A12.30</name>
</gene>
<keyword id="KW-0963">Cytoplasm</keyword>
<keyword id="KW-0539">Nucleus</keyword>
<keyword id="KW-0597">Phosphoprotein</keyword>
<keyword id="KW-1185">Reference proteome</keyword>
<keyword id="KW-0677">Repeat</keyword>
<keyword id="KW-0808">Transferase</keyword>
<keyword id="KW-0833">Ubl conjugation pathway</keyword>
<proteinExistence type="evidence at protein level"/>
<dbReference type="EC" id="2.3.2.27"/>
<dbReference type="EMBL" id="AL133314">
    <property type="protein sequence ID" value="CAB62321.1"/>
    <property type="molecule type" value="Genomic_DNA"/>
</dbReference>
<dbReference type="EMBL" id="CP002686">
    <property type="protein sequence ID" value="AEE78167.1"/>
    <property type="molecule type" value="Genomic_DNA"/>
</dbReference>
<dbReference type="EMBL" id="AY042791">
    <property type="protein sequence ID" value="AAK68731.1"/>
    <property type="molecule type" value="mRNA"/>
</dbReference>
<dbReference type="EMBL" id="AY128813">
    <property type="protein sequence ID" value="AAM91213.1"/>
    <property type="molecule type" value="mRNA"/>
</dbReference>
<dbReference type="PIR" id="T45588">
    <property type="entry name" value="T45588"/>
</dbReference>
<dbReference type="RefSeq" id="NP_190235.1">
    <property type="nucleotide sequence ID" value="NM_114518.4"/>
</dbReference>
<dbReference type="SMR" id="Q9SNC6"/>
<dbReference type="BioGRID" id="9124">
    <property type="interactions" value="7"/>
</dbReference>
<dbReference type="FunCoup" id="Q9SNC6">
    <property type="interactions" value="1580"/>
</dbReference>
<dbReference type="STRING" id="3702.Q9SNC6"/>
<dbReference type="iPTMnet" id="Q9SNC6"/>
<dbReference type="PaxDb" id="3702-AT3G46510.1"/>
<dbReference type="ProteomicsDB" id="224848"/>
<dbReference type="EnsemblPlants" id="AT3G46510.1">
    <property type="protein sequence ID" value="AT3G46510.1"/>
    <property type="gene ID" value="AT3G46510"/>
</dbReference>
<dbReference type="GeneID" id="823804"/>
<dbReference type="Gramene" id="AT3G46510.1">
    <property type="protein sequence ID" value="AT3G46510.1"/>
    <property type="gene ID" value="AT3G46510"/>
</dbReference>
<dbReference type="KEGG" id="ath:AT3G46510"/>
<dbReference type="Araport" id="AT3G46510"/>
<dbReference type="TAIR" id="AT3G46510">
    <property type="gene designation" value="PUB13"/>
</dbReference>
<dbReference type="eggNOG" id="KOG0167">
    <property type="taxonomic scope" value="Eukaryota"/>
</dbReference>
<dbReference type="HOGENOM" id="CLU_006348_5_1_1"/>
<dbReference type="InParanoid" id="Q9SNC6"/>
<dbReference type="OMA" id="KEAMCSA"/>
<dbReference type="PhylomeDB" id="Q9SNC6"/>
<dbReference type="UniPathway" id="UPA00143"/>
<dbReference type="PRO" id="PR:Q9SNC6"/>
<dbReference type="Proteomes" id="UP000006548">
    <property type="component" value="Chromosome 3"/>
</dbReference>
<dbReference type="ExpressionAtlas" id="Q9SNC6">
    <property type="expression patterns" value="baseline and differential"/>
</dbReference>
<dbReference type="GO" id="GO:0005737">
    <property type="term" value="C:cytoplasm"/>
    <property type="evidence" value="ECO:0000314"/>
    <property type="project" value="UniProtKB"/>
</dbReference>
<dbReference type="GO" id="GO:0005829">
    <property type="term" value="C:cytosol"/>
    <property type="evidence" value="ECO:0000314"/>
    <property type="project" value="TAIR"/>
</dbReference>
<dbReference type="GO" id="GO:0005634">
    <property type="term" value="C:nucleus"/>
    <property type="evidence" value="ECO:0000314"/>
    <property type="project" value="UniProtKB"/>
</dbReference>
<dbReference type="GO" id="GO:0070696">
    <property type="term" value="F:transmembrane receptor protein serine/threonine kinase binding"/>
    <property type="evidence" value="ECO:0000353"/>
    <property type="project" value="UniProtKB"/>
</dbReference>
<dbReference type="GO" id="GO:0004842">
    <property type="term" value="F:ubiquitin-protein transferase activity"/>
    <property type="evidence" value="ECO:0000314"/>
    <property type="project" value="TAIR"/>
</dbReference>
<dbReference type="GO" id="GO:0007166">
    <property type="term" value="P:cell surface receptor signaling pathway"/>
    <property type="evidence" value="ECO:0007669"/>
    <property type="project" value="InterPro"/>
</dbReference>
<dbReference type="GO" id="GO:0042742">
    <property type="term" value="P:defense response to bacterium"/>
    <property type="evidence" value="ECO:0000316"/>
    <property type="project" value="TAIR"/>
</dbReference>
<dbReference type="GO" id="GO:0043066">
    <property type="term" value="P:negative regulation of apoptotic process"/>
    <property type="evidence" value="ECO:0000315"/>
    <property type="project" value="CACAO"/>
</dbReference>
<dbReference type="GO" id="GO:0050777">
    <property type="term" value="P:negative regulation of immune response"/>
    <property type="evidence" value="ECO:0000316"/>
    <property type="project" value="TAIR"/>
</dbReference>
<dbReference type="GO" id="GO:0016567">
    <property type="term" value="P:protein ubiquitination"/>
    <property type="evidence" value="ECO:0000314"/>
    <property type="project" value="TAIR"/>
</dbReference>
<dbReference type="GO" id="GO:2000028">
    <property type="term" value="P:regulation of photoperiodism, flowering"/>
    <property type="evidence" value="ECO:0000315"/>
    <property type="project" value="CACAO"/>
</dbReference>
<dbReference type="CDD" id="cd21037">
    <property type="entry name" value="MLKL_NTD"/>
    <property type="match status" value="1"/>
</dbReference>
<dbReference type="CDD" id="cd16664">
    <property type="entry name" value="RING-Ubox_PUB"/>
    <property type="match status" value="1"/>
</dbReference>
<dbReference type="FunFam" id="1.20.930.20:FF:000002">
    <property type="entry name" value="RING-type E3 ubiquitin transferase"/>
    <property type="match status" value="1"/>
</dbReference>
<dbReference type="FunFam" id="1.25.10.10:FF:000367">
    <property type="entry name" value="RING-type E3 ubiquitin transferase"/>
    <property type="match status" value="1"/>
</dbReference>
<dbReference type="FunFam" id="1.25.10.10:FF:000690">
    <property type="entry name" value="RING-type E3 ubiquitin transferase"/>
    <property type="match status" value="1"/>
</dbReference>
<dbReference type="FunFam" id="3.30.40.10:FF:000292">
    <property type="entry name" value="RING-type E3 ubiquitin transferase"/>
    <property type="match status" value="1"/>
</dbReference>
<dbReference type="Gene3D" id="1.20.930.20">
    <property type="entry name" value="Adaptor protein Cbl, N-terminal domain"/>
    <property type="match status" value="1"/>
</dbReference>
<dbReference type="Gene3D" id="1.25.10.10">
    <property type="entry name" value="Leucine-rich Repeat Variant"/>
    <property type="match status" value="2"/>
</dbReference>
<dbReference type="Gene3D" id="3.30.40.10">
    <property type="entry name" value="Zinc/RING finger domain, C3HC4 (zinc finger)"/>
    <property type="match status" value="1"/>
</dbReference>
<dbReference type="InterPro" id="IPR036537">
    <property type="entry name" value="Adaptor_Cbl_N_dom_sf"/>
</dbReference>
<dbReference type="InterPro" id="IPR011989">
    <property type="entry name" value="ARM-like"/>
</dbReference>
<dbReference type="InterPro" id="IPR016024">
    <property type="entry name" value="ARM-type_fold"/>
</dbReference>
<dbReference type="InterPro" id="IPR000225">
    <property type="entry name" value="Armadillo"/>
</dbReference>
<dbReference type="InterPro" id="IPR045210">
    <property type="entry name" value="RING-Ubox_PUB"/>
</dbReference>
<dbReference type="InterPro" id="IPR003613">
    <property type="entry name" value="Ubox_domain"/>
</dbReference>
<dbReference type="InterPro" id="IPR013083">
    <property type="entry name" value="Znf_RING/FYVE/PHD"/>
</dbReference>
<dbReference type="PANTHER" id="PTHR23315">
    <property type="entry name" value="U BOX DOMAIN-CONTAINING"/>
    <property type="match status" value="1"/>
</dbReference>
<dbReference type="PANTHER" id="PTHR23315:SF275">
    <property type="entry name" value="U-BOX DOMAIN-CONTAINING PROTEIN 13"/>
    <property type="match status" value="1"/>
</dbReference>
<dbReference type="Pfam" id="PF00514">
    <property type="entry name" value="Arm"/>
    <property type="match status" value="4"/>
</dbReference>
<dbReference type="Pfam" id="PF25368">
    <property type="entry name" value="PUB10_N"/>
    <property type="match status" value="1"/>
</dbReference>
<dbReference type="Pfam" id="PF04564">
    <property type="entry name" value="U-box"/>
    <property type="match status" value="1"/>
</dbReference>
<dbReference type="SMART" id="SM00185">
    <property type="entry name" value="ARM"/>
    <property type="match status" value="6"/>
</dbReference>
<dbReference type="SMART" id="SM00504">
    <property type="entry name" value="Ubox"/>
    <property type="match status" value="1"/>
</dbReference>
<dbReference type="SUPFAM" id="SSF48371">
    <property type="entry name" value="ARM repeat"/>
    <property type="match status" value="1"/>
</dbReference>
<dbReference type="SUPFAM" id="SSF57850">
    <property type="entry name" value="RING/U-box"/>
    <property type="match status" value="1"/>
</dbReference>
<dbReference type="PROSITE" id="PS50176">
    <property type="entry name" value="ARM_REPEAT"/>
    <property type="match status" value="2"/>
</dbReference>
<dbReference type="PROSITE" id="PS51698">
    <property type="entry name" value="U_BOX"/>
    <property type="match status" value="1"/>
</dbReference>
<evidence type="ECO:0000250" key="1"/>
<evidence type="ECO:0000256" key="2">
    <source>
        <dbReference type="SAM" id="MobiDB-lite"/>
    </source>
</evidence>
<evidence type="ECO:0000269" key="3">
    <source>
    </source>
</evidence>
<evidence type="ECO:0000305" key="4"/>
<feature type="chain" id="PRO_0000322158" description="U-box domain-containing protein 13">
    <location>
        <begin position="1"/>
        <end position="660"/>
    </location>
</feature>
<feature type="domain" description="U-box">
    <location>
        <begin position="255"/>
        <end position="329"/>
    </location>
</feature>
<feature type="repeat" description="ARM 1">
    <location>
        <begin position="384"/>
        <end position="423"/>
    </location>
</feature>
<feature type="repeat" description="ARM 2">
    <location>
        <begin position="425"/>
        <end position="464"/>
    </location>
</feature>
<feature type="repeat" description="ARM 3">
    <location>
        <begin position="466"/>
        <end position="505"/>
    </location>
</feature>
<feature type="repeat" description="ARM 4">
    <location>
        <begin position="507"/>
        <end position="546"/>
    </location>
</feature>
<feature type="repeat" description="ARM 5">
    <location>
        <begin position="548"/>
        <end position="587"/>
    </location>
</feature>
<feature type="region of interest" description="Disordered" evidence="2">
    <location>
        <begin position="227"/>
        <end position="252"/>
    </location>
</feature>
<feature type="region of interest" description="Disordered" evidence="2">
    <location>
        <begin position="631"/>
        <end position="660"/>
    </location>
</feature>
<feature type="compositionally biased region" description="Polar residues" evidence="2">
    <location>
        <begin position="236"/>
        <end position="250"/>
    </location>
</feature>
<feature type="compositionally biased region" description="Polar residues" evidence="2">
    <location>
        <begin position="651"/>
        <end position="660"/>
    </location>
</feature>
<organism>
    <name type="scientific">Arabidopsis thaliana</name>
    <name type="common">Mouse-ear cress</name>
    <dbReference type="NCBI Taxonomy" id="3702"/>
    <lineage>
        <taxon>Eukaryota</taxon>
        <taxon>Viridiplantae</taxon>
        <taxon>Streptophyta</taxon>
        <taxon>Embryophyta</taxon>
        <taxon>Tracheophyta</taxon>
        <taxon>Spermatophyta</taxon>
        <taxon>Magnoliopsida</taxon>
        <taxon>eudicotyledons</taxon>
        <taxon>Gunneridae</taxon>
        <taxon>Pentapetalae</taxon>
        <taxon>rosids</taxon>
        <taxon>malvids</taxon>
        <taxon>Brassicales</taxon>
        <taxon>Brassicaceae</taxon>
        <taxon>Camelineae</taxon>
        <taxon>Arabidopsis</taxon>
    </lineage>
</organism>
<sequence length="660" mass="71966">MEEEKASAAQSLIDVVNEIAAISDYRITVKKLCYNLARRLKLLVPMFEEIRESNEPISEDTLKTLMNLKEAMCSAKDYLKFCSQGSKIYLVMEREQVTSKLMEVSVKLEQSLSQIPYEELDISDEVREQVELVLSQFRRAKGRVDVSDDELYEDLQSLCNKSSDVDAYQPVLERVAKKLHLMEIPDLAQESVALHEMVASSGGDVGENIEEMAMVLKMIKDFVQTEDDNGEEQKVGVNSRSNGQTSTAASQKIPVIPDDFRCPISLEMMRDPVIVSSGQTYERTCIEKWIEGGHSTCPKTQQALTSTTLTPNYVLRSLIAQWCEANDIEPPKPPSSLRPRKVSSFSSPAEANKIEDLMWRLAYGNPEDQRSAAGEIRLLAKRNADNRVAIAEAGAIPLLVGLLSTPDSRIQEHSVTALLNLSICENNKGAIVSAGAIPGIVQVLKKGSMEARENAAATLFSLSVIDENKVTIGALGAIPPLVVLLNEGTQRGKKDAATALFNLCIYQGNKGKAIRAGVIPTLTRLLTEPGSGMVDEALAILAILSSHPEGKAIIGSSDAVPSLVEFIRTGSPRNRENAAAVLVHLCSGDPQHLVEAQKLGLMGPLIDLAGNGTDRGKRKAAQLLERISRLAEQQKETAVSQPEEEAEPTHPESTTEAADT</sequence>
<comment type="function">
    <text evidence="1">Functions as an E3 ubiquitin ligase.</text>
</comment>
<comment type="catalytic activity">
    <reaction>
        <text>S-ubiquitinyl-[E2 ubiquitin-conjugating enzyme]-L-cysteine + [acceptor protein]-L-lysine = [E2 ubiquitin-conjugating enzyme]-L-cysteine + N(6)-ubiquitinyl-[acceptor protein]-L-lysine.</text>
        <dbReference type="EC" id="2.3.2.27"/>
    </reaction>
</comment>
<comment type="pathway">
    <text>Protein modification; protein ubiquitination.</text>
</comment>
<comment type="subunit">
    <text>Binds to SD11, SD16, SD17, SD18, SD113, SD129 and SD25.</text>
</comment>
<comment type="subcellular location">
    <subcellularLocation>
        <location evidence="3">Nucleus</location>
    </subcellularLocation>
    <subcellularLocation>
        <location evidence="3">Cytoplasm</location>
    </subcellularLocation>
</comment>
<comment type="PTM">
    <text evidence="3">Phosphorylated by SD1-6 and SD1-7.</text>
</comment>
<accession>Q9SNC6</accession>
<reference key="1">
    <citation type="journal article" date="2000" name="Nature">
        <title>Sequence and analysis of chromosome 3 of the plant Arabidopsis thaliana.</title>
        <authorList>
            <person name="Salanoubat M."/>
            <person name="Lemcke K."/>
            <person name="Rieger M."/>
            <person name="Ansorge W."/>
            <person name="Unseld M."/>
            <person name="Fartmann B."/>
            <person name="Valle G."/>
            <person name="Bloecker H."/>
            <person name="Perez-Alonso M."/>
            <person name="Obermaier B."/>
            <person name="Delseny M."/>
            <person name="Boutry M."/>
            <person name="Grivell L.A."/>
            <person name="Mache R."/>
            <person name="Puigdomenech P."/>
            <person name="De Simone V."/>
            <person name="Choisne N."/>
            <person name="Artiguenave F."/>
            <person name="Robert C."/>
            <person name="Brottier P."/>
            <person name="Wincker P."/>
            <person name="Cattolico L."/>
            <person name="Weissenbach J."/>
            <person name="Saurin W."/>
            <person name="Quetier F."/>
            <person name="Schaefer M."/>
            <person name="Mueller-Auer S."/>
            <person name="Gabel C."/>
            <person name="Fuchs M."/>
            <person name="Benes V."/>
            <person name="Wurmbach E."/>
            <person name="Drzonek H."/>
            <person name="Erfle H."/>
            <person name="Jordan N."/>
            <person name="Bangert S."/>
            <person name="Wiedelmann R."/>
            <person name="Kranz H."/>
            <person name="Voss H."/>
            <person name="Holland R."/>
            <person name="Brandt P."/>
            <person name="Nyakatura G."/>
            <person name="Vezzi A."/>
            <person name="D'Angelo M."/>
            <person name="Pallavicini A."/>
            <person name="Toppo S."/>
            <person name="Simionati B."/>
            <person name="Conrad A."/>
            <person name="Hornischer K."/>
            <person name="Kauer G."/>
            <person name="Loehnert T.-H."/>
            <person name="Nordsiek G."/>
            <person name="Reichelt J."/>
            <person name="Scharfe M."/>
            <person name="Schoen O."/>
            <person name="Bargues M."/>
            <person name="Terol J."/>
            <person name="Climent J."/>
            <person name="Navarro P."/>
            <person name="Collado C."/>
            <person name="Perez-Perez A."/>
            <person name="Ottenwaelder B."/>
            <person name="Duchemin D."/>
            <person name="Cooke R."/>
            <person name="Laudie M."/>
            <person name="Berger-Llauro C."/>
            <person name="Purnelle B."/>
            <person name="Masuy D."/>
            <person name="de Haan M."/>
            <person name="Maarse A.C."/>
            <person name="Alcaraz J.-P."/>
            <person name="Cottet A."/>
            <person name="Casacuberta E."/>
            <person name="Monfort A."/>
            <person name="Argiriou A."/>
            <person name="Flores M."/>
            <person name="Liguori R."/>
            <person name="Vitale D."/>
            <person name="Mannhaupt G."/>
            <person name="Haase D."/>
            <person name="Schoof H."/>
            <person name="Rudd S."/>
            <person name="Zaccaria P."/>
            <person name="Mewes H.-W."/>
            <person name="Mayer K.F.X."/>
            <person name="Kaul S."/>
            <person name="Town C.D."/>
            <person name="Koo H.L."/>
            <person name="Tallon L.J."/>
            <person name="Jenkins J."/>
            <person name="Rooney T."/>
            <person name="Rizzo M."/>
            <person name="Walts A."/>
            <person name="Utterback T."/>
            <person name="Fujii C.Y."/>
            <person name="Shea T.P."/>
            <person name="Creasy T.H."/>
            <person name="Haas B."/>
            <person name="Maiti R."/>
            <person name="Wu D."/>
            <person name="Peterson J."/>
            <person name="Van Aken S."/>
            <person name="Pai G."/>
            <person name="Militscher J."/>
            <person name="Sellers P."/>
            <person name="Gill J.E."/>
            <person name="Feldblyum T.V."/>
            <person name="Preuss D."/>
            <person name="Lin X."/>
            <person name="Nierman W.C."/>
            <person name="Salzberg S.L."/>
            <person name="White O."/>
            <person name="Venter J.C."/>
            <person name="Fraser C.M."/>
            <person name="Kaneko T."/>
            <person name="Nakamura Y."/>
            <person name="Sato S."/>
            <person name="Kato T."/>
            <person name="Asamizu E."/>
            <person name="Sasamoto S."/>
            <person name="Kimura T."/>
            <person name="Idesawa K."/>
            <person name="Kawashima K."/>
            <person name="Kishida Y."/>
            <person name="Kiyokawa C."/>
            <person name="Kohara M."/>
            <person name="Matsumoto M."/>
            <person name="Matsuno A."/>
            <person name="Muraki A."/>
            <person name="Nakayama S."/>
            <person name="Nakazaki N."/>
            <person name="Shinpo S."/>
            <person name="Takeuchi C."/>
            <person name="Wada T."/>
            <person name="Watanabe A."/>
            <person name="Yamada M."/>
            <person name="Yasuda M."/>
            <person name="Tabata S."/>
        </authorList>
    </citation>
    <scope>NUCLEOTIDE SEQUENCE [LARGE SCALE GENOMIC DNA]</scope>
    <source>
        <strain>cv. Columbia</strain>
    </source>
</reference>
<reference key="2">
    <citation type="journal article" date="2017" name="Plant J.">
        <title>Araport11: a complete reannotation of the Arabidopsis thaliana reference genome.</title>
        <authorList>
            <person name="Cheng C.Y."/>
            <person name="Krishnakumar V."/>
            <person name="Chan A.P."/>
            <person name="Thibaud-Nissen F."/>
            <person name="Schobel S."/>
            <person name="Town C.D."/>
        </authorList>
    </citation>
    <scope>GENOME REANNOTATION</scope>
    <source>
        <strain>cv. Columbia</strain>
    </source>
</reference>
<reference key="3">
    <citation type="journal article" date="2003" name="Science">
        <title>Empirical analysis of transcriptional activity in the Arabidopsis genome.</title>
        <authorList>
            <person name="Yamada K."/>
            <person name="Lim J."/>
            <person name="Dale J.M."/>
            <person name="Chen H."/>
            <person name="Shinn P."/>
            <person name="Palm C.J."/>
            <person name="Southwick A.M."/>
            <person name="Wu H.C."/>
            <person name="Kim C.J."/>
            <person name="Nguyen M."/>
            <person name="Pham P.K."/>
            <person name="Cheuk R.F."/>
            <person name="Karlin-Newmann G."/>
            <person name="Liu S.X."/>
            <person name="Lam B."/>
            <person name="Sakano H."/>
            <person name="Wu T."/>
            <person name="Yu G."/>
            <person name="Miranda M."/>
            <person name="Quach H.L."/>
            <person name="Tripp M."/>
            <person name="Chang C.H."/>
            <person name="Lee J.M."/>
            <person name="Toriumi M.J."/>
            <person name="Chan M.M."/>
            <person name="Tang C.C."/>
            <person name="Onodera C.S."/>
            <person name="Deng J.M."/>
            <person name="Akiyama K."/>
            <person name="Ansari Y."/>
            <person name="Arakawa T."/>
            <person name="Banh J."/>
            <person name="Banno F."/>
            <person name="Bowser L."/>
            <person name="Brooks S.Y."/>
            <person name="Carninci P."/>
            <person name="Chao Q."/>
            <person name="Choy N."/>
            <person name="Enju A."/>
            <person name="Goldsmith A.D."/>
            <person name="Gurjal M."/>
            <person name="Hansen N.F."/>
            <person name="Hayashizaki Y."/>
            <person name="Johnson-Hopson C."/>
            <person name="Hsuan V.W."/>
            <person name="Iida K."/>
            <person name="Karnes M."/>
            <person name="Khan S."/>
            <person name="Koesema E."/>
            <person name="Ishida J."/>
            <person name="Jiang P.X."/>
            <person name="Jones T."/>
            <person name="Kawai J."/>
            <person name="Kamiya A."/>
            <person name="Meyers C."/>
            <person name="Nakajima M."/>
            <person name="Narusaka M."/>
            <person name="Seki M."/>
            <person name="Sakurai T."/>
            <person name="Satou M."/>
            <person name="Tamse R."/>
            <person name="Vaysberg M."/>
            <person name="Wallender E.K."/>
            <person name="Wong C."/>
            <person name="Yamamura Y."/>
            <person name="Yuan S."/>
            <person name="Shinozaki K."/>
            <person name="Davis R.W."/>
            <person name="Theologis A."/>
            <person name="Ecker J.R."/>
        </authorList>
    </citation>
    <scope>NUCLEOTIDE SEQUENCE [LARGE SCALE MRNA]</scope>
    <source>
        <strain>cv. Columbia</strain>
    </source>
</reference>
<reference key="4">
    <citation type="journal article" date="2001" name="Trends Plant Sci.">
        <title>The U-box protein family in plants.</title>
        <authorList>
            <person name="Azevedo C."/>
            <person name="Santos-Rosa M.J."/>
            <person name="Shirasu K."/>
        </authorList>
    </citation>
    <scope>GENE FAMILY ORGANIZATION</scope>
    <scope>NOMENCLATURE</scope>
</reference>
<reference key="5">
    <citation type="journal article" date="2004" name="Plant Physiol.">
        <title>A large complement of the predicted Arabidopsis ARM repeat proteins are members of the U-box E3 ubiquitin ligase family.</title>
        <authorList>
            <person name="Mudgil Y."/>
            <person name="Shiu S.-H."/>
            <person name="Stone S.L."/>
            <person name="Salt J.N."/>
            <person name="Goring D.R."/>
        </authorList>
    </citation>
    <scope>GENE FAMILY ORGANIZATION</scope>
</reference>
<reference key="6">
    <citation type="journal article" date="2008" name="Plant Physiol.">
        <title>Interactions between the S-domain receptor kinases and AtPUB-ARM E3 ubiquitin ligases suggest a conserved signaling pathway in Arabidopsis.</title>
        <authorList>
            <person name="Samuel M.A."/>
            <person name="Mudgil Y."/>
            <person name="Salt J.N."/>
            <person name="Delmas F."/>
            <person name="Ramachandran S."/>
            <person name="Chilelli A."/>
            <person name="Goring D.R."/>
        </authorList>
    </citation>
    <scope>INTERACTION WITH SD11; SD16; SD17; SD18; SD113; SD129 AND SD25</scope>
    <scope>PHOSPHORYLATION</scope>
    <scope>SUBCELLULAR LOCATION</scope>
</reference>
<reference key="7">
    <citation type="journal article" date="2009" name="Plant Physiol.">
        <title>Large-scale Arabidopsis phosphoproteome profiling reveals novel chloroplast kinase substrates and phosphorylation networks.</title>
        <authorList>
            <person name="Reiland S."/>
            <person name="Messerli G."/>
            <person name="Baerenfaller K."/>
            <person name="Gerrits B."/>
            <person name="Endler A."/>
            <person name="Grossmann J."/>
            <person name="Gruissem W."/>
            <person name="Baginsky S."/>
        </authorList>
    </citation>
    <scope>IDENTIFICATION BY MASS SPECTROMETRY [LARGE SCALE ANALYSIS]</scope>
</reference>
<name>PUB13_ARATH</name>